<dbReference type="EC" id="3.1.26.4" evidence="1"/>
<dbReference type="EMBL" id="CP000026">
    <property type="protein sequence ID" value="AAV78380.1"/>
    <property type="molecule type" value="Genomic_DNA"/>
</dbReference>
<dbReference type="RefSeq" id="WP_000917872.1">
    <property type="nucleotide sequence ID" value="NC_006511.1"/>
</dbReference>
<dbReference type="SMR" id="Q5PFD8"/>
<dbReference type="KEGG" id="spt:SPA2506"/>
<dbReference type="HOGENOM" id="CLU_030894_6_0_6"/>
<dbReference type="Proteomes" id="UP000008185">
    <property type="component" value="Chromosome"/>
</dbReference>
<dbReference type="GO" id="GO:0005737">
    <property type="term" value="C:cytoplasm"/>
    <property type="evidence" value="ECO:0007669"/>
    <property type="project" value="UniProtKB-SubCell"/>
</dbReference>
<dbReference type="GO" id="GO:0000287">
    <property type="term" value="F:magnesium ion binding"/>
    <property type="evidence" value="ECO:0007669"/>
    <property type="project" value="UniProtKB-UniRule"/>
</dbReference>
<dbReference type="GO" id="GO:0003676">
    <property type="term" value="F:nucleic acid binding"/>
    <property type="evidence" value="ECO:0007669"/>
    <property type="project" value="InterPro"/>
</dbReference>
<dbReference type="GO" id="GO:0004523">
    <property type="term" value="F:RNA-DNA hybrid ribonuclease activity"/>
    <property type="evidence" value="ECO:0007669"/>
    <property type="project" value="UniProtKB-UniRule"/>
</dbReference>
<dbReference type="GO" id="GO:0043137">
    <property type="term" value="P:DNA replication, removal of RNA primer"/>
    <property type="evidence" value="ECO:0007669"/>
    <property type="project" value="TreeGrafter"/>
</dbReference>
<dbReference type="CDD" id="cd09278">
    <property type="entry name" value="RNase_HI_prokaryote_like"/>
    <property type="match status" value="1"/>
</dbReference>
<dbReference type="FunFam" id="3.30.420.10:FF:000008">
    <property type="entry name" value="Ribonuclease H"/>
    <property type="match status" value="1"/>
</dbReference>
<dbReference type="Gene3D" id="3.30.420.10">
    <property type="entry name" value="Ribonuclease H-like superfamily/Ribonuclease H"/>
    <property type="match status" value="1"/>
</dbReference>
<dbReference type="HAMAP" id="MF_00042">
    <property type="entry name" value="RNase_H"/>
    <property type="match status" value="1"/>
</dbReference>
<dbReference type="InterPro" id="IPR050092">
    <property type="entry name" value="RNase_H"/>
</dbReference>
<dbReference type="InterPro" id="IPR012337">
    <property type="entry name" value="RNaseH-like_sf"/>
</dbReference>
<dbReference type="InterPro" id="IPR002156">
    <property type="entry name" value="RNaseH_domain"/>
</dbReference>
<dbReference type="InterPro" id="IPR036397">
    <property type="entry name" value="RNaseH_sf"/>
</dbReference>
<dbReference type="InterPro" id="IPR022892">
    <property type="entry name" value="RNaseHI"/>
</dbReference>
<dbReference type="NCBIfam" id="NF001236">
    <property type="entry name" value="PRK00203.1"/>
    <property type="match status" value="1"/>
</dbReference>
<dbReference type="PANTHER" id="PTHR10642">
    <property type="entry name" value="RIBONUCLEASE H1"/>
    <property type="match status" value="1"/>
</dbReference>
<dbReference type="PANTHER" id="PTHR10642:SF26">
    <property type="entry name" value="RIBONUCLEASE H1"/>
    <property type="match status" value="1"/>
</dbReference>
<dbReference type="Pfam" id="PF00075">
    <property type="entry name" value="RNase_H"/>
    <property type="match status" value="1"/>
</dbReference>
<dbReference type="SUPFAM" id="SSF53098">
    <property type="entry name" value="Ribonuclease H-like"/>
    <property type="match status" value="1"/>
</dbReference>
<dbReference type="PROSITE" id="PS50879">
    <property type="entry name" value="RNASE_H_1"/>
    <property type="match status" value="1"/>
</dbReference>
<comment type="function">
    <text evidence="1">Endonuclease that specifically degrades the RNA of RNA-DNA hybrids.</text>
</comment>
<comment type="catalytic activity">
    <reaction evidence="1">
        <text>Endonucleolytic cleavage to 5'-phosphomonoester.</text>
        <dbReference type="EC" id="3.1.26.4"/>
    </reaction>
</comment>
<comment type="cofactor">
    <cofactor evidence="1">
        <name>Mg(2+)</name>
        <dbReference type="ChEBI" id="CHEBI:18420"/>
    </cofactor>
    <text evidence="1">Binds 1 Mg(2+) ion per subunit. May bind a second metal ion at a regulatory site, or after substrate binding.</text>
</comment>
<comment type="subunit">
    <text evidence="1">Monomer.</text>
</comment>
<comment type="subcellular location">
    <subcellularLocation>
        <location evidence="1">Cytoplasm</location>
    </subcellularLocation>
</comment>
<comment type="similarity">
    <text evidence="1">Belongs to the RNase H family.</text>
</comment>
<gene>
    <name evidence="1" type="primary">rnhA</name>
    <name type="ordered locus">SPA2506</name>
</gene>
<reference key="1">
    <citation type="journal article" date="2004" name="Nat. Genet.">
        <title>Comparison of genome degradation in Paratyphi A and Typhi, human-restricted serovars of Salmonella enterica that cause typhoid.</title>
        <authorList>
            <person name="McClelland M."/>
            <person name="Sanderson K.E."/>
            <person name="Clifton S.W."/>
            <person name="Latreille P."/>
            <person name="Porwollik S."/>
            <person name="Sabo A."/>
            <person name="Meyer R."/>
            <person name="Bieri T."/>
            <person name="Ozersky P."/>
            <person name="McLellan M."/>
            <person name="Harkins C.R."/>
            <person name="Wang C."/>
            <person name="Nguyen C."/>
            <person name="Berghoff A."/>
            <person name="Elliott G."/>
            <person name="Kohlberg S."/>
            <person name="Strong C."/>
            <person name="Du F."/>
            <person name="Carter J."/>
            <person name="Kremizki C."/>
            <person name="Layman D."/>
            <person name="Leonard S."/>
            <person name="Sun H."/>
            <person name="Fulton L."/>
            <person name="Nash W."/>
            <person name="Miner T."/>
            <person name="Minx P."/>
            <person name="Delehaunty K."/>
            <person name="Fronick C."/>
            <person name="Magrini V."/>
            <person name="Nhan M."/>
            <person name="Warren W."/>
            <person name="Florea L."/>
            <person name="Spieth J."/>
            <person name="Wilson R.K."/>
        </authorList>
    </citation>
    <scope>NUCLEOTIDE SEQUENCE [LARGE SCALE GENOMIC DNA]</scope>
    <source>
        <strain>ATCC 9150 / SARB42</strain>
    </source>
</reference>
<keyword id="KW-0963">Cytoplasm</keyword>
<keyword id="KW-0255">Endonuclease</keyword>
<keyword id="KW-0378">Hydrolase</keyword>
<keyword id="KW-0460">Magnesium</keyword>
<keyword id="KW-0479">Metal-binding</keyword>
<keyword id="KW-0540">Nuclease</keyword>
<organism>
    <name type="scientific">Salmonella paratyphi A (strain ATCC 9150 / SARB42)</name>
    <dbReference type="NCBI Taxonomy" id="295319"/>
    <lineage>
        <taxon>Bacteria</taxon>
        <taxon>Pseudomonadati</taxon>
        <taxon>Pseudomonadota</taxon>
        <taxon>Gammaproteobacteria</taxon>
        <taxon>Enterobacterales</taxon>
        <taxon>Enterobacteriaceae</taxon>
        <taxon>Salmonella</taxon>
    </lineage>
</organism>
<name>RNH_SALPA</name>
<proteinExistence type="inferred from homology"/>
<evidence type="ECO:0000255" key="1">
    <source>
        <dbReference type="HAMAP-Rule" id="MF_00042"/>
    </source>
</evidence>
<evidence type="ECO:0000255" key="2">
    <source>
        <dbReference type="PROSITE-ProRule" id="PRU00408"/>
    </source>
</evidence>
<accession>Q5PFD8</accession>
<sequence length="155" mass="17510">MLKQVEIFTDGSCLGNPGPGGYGAILRYRGHEKTFSEGYTLTTNNRMELMAAIVALEALKEHCEVTLSTDSQYVRQGITQWIHNWKKRGWKTAEKKPVKNVDLWKRLDAALGQHQIKWVWVKGHAGHPENERCDELARAAAMNPTQEDSGYQAEA</sequence>
<feature type="chain" id="PRO_0000195400" description="Ribonuclease H">
    <location>
        <begin position="1"/>
        <end position="155"/>
    </location>
</feature>
<feature type="domain" description="RNase H type-1" evidence="2">
    <location>
        <begin position="1"/>
        <end position="142"/>
    </location>
</feature>
<feature type="binding site" evidence="1">
    <location>
        <position position="10"/>
    </location>
    <ligand>
        <name>Mg(2+)</name>
        <dbReference type="ChEBI" id="CHEBI:18420"/>
        <label>1</label>
    </ligand>
</feature>
<feature type="binding site" evidence="1">
    <location>
        <position position="10"/>
    </location>
    <ligand>
        <name>Mg(2+)</name>
        <dbReference type="ChEBI" id="CHEBI:18420"/>
        <label>2</label>
    </ligand>
</feature>
<feature type="binding site" evidence="1">
    <location>
        <position position="48"/>
    </location>
    <ligand>
        <name>Mg(2+)</name>
        <dbReference type="ChEBI" id="CHEBI:18420"/>
        <label>1</label>
    </ligand>
</feature>
<feature type="binding site" evidence="1">
    <location>
        <position position="70"/>
    </location>
    <ligand>
        <name>Mg(2+)</name>
        <dbReference type="ChEBI" id="CHEBI:18420"/>
        <label>1</label>
    </ligand>
</feature>
<feature type="binding site" evidence="1">
    <location>
        <position position="134"/>
    </location>
    <ligand>
        <name>Mg(2+)</name>
        <dbReference type="ChEBI" id="CHEBI:18420"/>
        <label>2</label>
    </ligand>
</feature>
<protein>
    <recommendedName>
        <fullName evidence="1">Ribonuclease H</fullName>
        <shortName evidence="1">RNase H</shortName>
        <ecNumber evidence="1">3.1.26.4</ecNumber>
    </recommendedName>
</protein>